<comment type="subcellular location">
    <subcellularLocation>
        <location evidence="1">Mitochondrion</location>
    </subcellularLocation>
</comment>
<comment type="similarity">
    <text evidence="3">Belongs to the AIM9 family.</text>
</comment>
<gene>
    <name type="primary">AIM9</name>
    <name type="synonym">FMP29</name>
    <name type="ORF">CLUG_03137</name>
</gene>
<sequence length="608" mass="70377">MLRRIVNTGTKRLFRVPPRSSALCFSRRLSDQTKEVYTKINDTKDPARNQFFQYTWGSWMKNDKLERARRQTRFSIEGLSKFAKDFKPQDAALGKPEHLTNGTVALKNNWTKEILGETGHDVKSIASIHEGKHHRIYKVTLANDRQLVLRIPYRLESDYAIENKINSEVATLDFLALKLKLNVPRVLAYGPTRTNILQTPFILMEYIEGDLLMKQWNPLVPDSETSEEELKKVIDPIMEFQDKLLSVTFNRFGSLYFFDDVSAANQKVVPYDEEDNLLKDRWRIGPSTESVFSKNKKQLASQKISQFNGPWDSVEKMLKDLAEVQVESLRFRLGLAQADSSNQVEDVDQLKKQIQTFENFKIISDKLLNPSSPAIKNVEELFKPRLFVPDLDPLNVIVEQKSSKPFFIDFEHTVIKPFILASYPAFVAYQGTKLYNLEEEIPGFKDMDDVEKQQYEFMYYKTRNERLWEFALNNKRHDLIAVASPHIKLLKAPYLQVVNCKTDKDFMFIENAIIQLQAMWEAYVANQICNSTTPEFPIEYTAEYLDEHQSDLENYQLEVASTPFAATGGWVPQDMFDVLKEQNILVEDENGNYKIEADAALKNPPKDP</sequence>
<reference key="1">
    <citation type="journal article" date="2009" name="Nature">
        <title>Evolution of pathogenicity and sexual reproduction in eight Candida genomes.</title>
        <authorList>
            <person name="Butler G."/>
            <person name="Rasmussen M.D."/>
            <person name="Lin M.F."/>
            <person name="Santos M.A.S."/>
            <person name="Sakthikumar S."/>
            <person name="Munro C.A."/>
            <person name="Rheinbay E."/>
            <person name="Grabherr M."/>
            <person name="Forche A."/>
            <person name="Reedy J.L."/>
            <person name="Agrafioti I."/>
            <person name="Arnaud M.B."/>
            <person name="Bates S."/>
            <person name="Brown A.J.P."/>
            <person name="Brunke S."/>
            <person name="Costanzo M.C."/>
            <person name="Fitzpatrick D.A."/>
            <person name="de Groot P.W.J."/>
            <person name="Harris D."/>
            <person name="Hoyer L.L."/>
            <person name="Hube B."/>
            <person name="Klis F.M."/>
            <person name="Kodira C."/>
            <person name="Lennard N."/>
            <person name="Logue M.E."/>
            <person name="Martin R."/>
            <person name="Neiman A.M."/>
            <person name="Nikolaou E."/>
            <person name="Quail M.A."/>
            <person name="Quinn J."/>
            <person name="Santos M.C."/>
            <person name="Schmitzberger F.F."/>
            <person name="Sherlock G."/>
            <person name="Shah P."/>
            <person name="Silverstein K.A.T."/>
            <person name="Skrzypek M.S."/>
            <person name="Soll D."/>
            <person name="Staggs R."/>
            <person name="Stansfield I."/>
            <person name="Stumpf M.P.H."/>
            <person name="Sudbery P.E."/>
            <person name="Srikantha T."/>
            <person name="Zeng Q."/>
            <person name="Berman J."/>
            <person name="Berriman M."/>
            <person name="Heitman J."/>
            <person name="Gow N.A.R."/>
            <person name="Lorenz M.C."/>
            <person name="Birren B.W."/>
            <person name="Kellis M."/>
            <person name="Cuomo C.A."/>
        </authorList>
    </citation>
    <scope>NUCLEOTIDE SEQUENCE [LARGE SCALE GENOMIC DNA]</scope>
    <source>
        <strain>ATCC 42720</strain>
    </source>
</reference>
<protein>
    <recommendedName>
        <fullName>Altered inheritance of mitochondria protein 9, mitochondrial</fullName>
    </recommendedName>
    <alternativeName>
        <fullName>Found in mitochondrial proteome protein 29</fullName>
    </alternativeName>
</protein>
<keyword id="KW-0496">Mitochondrion</keyword>
<keyword id="KW-1185">Reference proteome</keyword>
<keyword id="KW-0809">Transit peptide</keyword>
<organism>
    <name type="scientific">Clavispora lusitaniae (strain ATCC 42720)</name>
    <name type="common">Yeast</name>
    <name type="synonym">Candida lusitaniae</name>
    <dbReference type="NCBI Taxonomy" id="306902"/>
    <lineage>
        <taxon>Eukaryota</taxon>
        <taxon>Fungi</taxon>
        <taxon>Dikarya</taxon>
        <taxon>Ascomycota</taxon>
        <taxon>Saccharomycotina</taxon>
        <taxon>Pichiomycetes</taxon>
        <taxon>Metschnikowiaceae</taxon>
        <taxon>Clavispora</taxon>
    </lineage>
</organism>
<dbReference type="EMBL" id="CH408078">
    <property type="protein sequence ID" value="EEQ39011.1"/>
    <property type="molecule type" value="Genomic_DNA"/>
</dbReference>
<dbReference type="RefSeq" id="XP_002617693.1">
    <property type="nucleotide sequence ID" value="XM_002617647.1"/>
</dbReference>
<dbReference type="FunCoup" id="C4Y3M4">
    <property type="interactions" value="24"/>
</dbReference>
<dbReference type="STRING" id="306902.C4Y3M4"/>
<dbReference type="GeneID" id="8497857"/>
<dbReference type="KEGG" id="clu:CLUG_03137"/>
<dbReference type="VEuPathDB" id="FungiDB:CLUG_03137"/>
<dbReference type="HOGENOM" id="CLU_019189_0_1_1"/>
<dbReference type="InParanoid" id="C4Y3M4"/>
<dbReference type="OMA" id="GWIPQDM"/>
<dbReference type="OrthoDB" id="122943at4891"/>
<dbReference type="Proteomes" id="UP000007703">
    <property type="component" value="Unassembled WGS sequence"/>
</dbReference>
<dbReference type="GO" id="GO:0005739">
    <property type="term" value="C:mitochondrion"/>
    <property type="evidence" value="ECO:0007669"/>
    <property type="project" value="UniProtKB-SubCell"/>
</dbReference>
<dbReference type="Gene3D" id="3.30.200.20">
    <property type="entry name" value="Phosphorylase Kinase, domain 1"/>
    <property type="match status" value="1"/>
</dbReference>
<dbReference type="InterPro" id="IPR002575">
    <property type="entry name" value="Aminoglycoside_PTrfase"/>
</dbReference>
<dbReference type="InterPro" id="IPR011009">
    <property type="entry name" value="Kinase-like_dom_sf"/>
</dbReference>
<dbReference type="InterPro" id="IPR051035">
    <property type="entry name" value="Mito_inheritance_9"/>
</dbReference>
<dbReference type="PANTHER" id="PTHR36091">
    <property type="entry name" value="ALTERED INHERITANCE OF MITOCHONDRIA PROTEIN 9, MITOCHONDRIAL"/>
    <property type="match status" value="1"/>
</dbReference>
<dbReference type="PANTHER" id="PTHR36091:SF1">
    <property type="entry name" value="ALTERED INHERITANCE OF MITOCHONDRIA PROTEIN 9, MITOCHONDRIAL"/>
    <property type="match status" value="1"/>
</dbReference>
<dbReference type="Pfam" id="PF01636">
    <property type="entry name" value="APH"/>
    <property type="match status" value="1"/>
</dbReference>
<dbReference type="SUPFAM" id="SSF56112">
    <property type="entry name" value="Protein kinase-like (PK-like)"/>
    <property type="match status" value="1"/>
</dbReference>
<name>AIM9_CLAL4</name>
<accession>C4Y3M4</accession>
<feature type="transit peptide" description="Mitochondrion" evidence="2">
    <location>
        <begin position="1"/>
        <end position="21"/>
    </location>
</feature>
<feature type="chain" id="PRO_0000408721" description="Altered inheritance of mitochondria protein 9, mitochondrial">
    <location>
        <begin position="22"/>
        <end position="608"/>
    </location>
</feature>
<proteinExistence type="inferred from homology"/>
<evidence type="ECO:0000250" key="1"/>
<evidence type="ECO:0000255" key="2"/>
<evidence type="ECO:0000305" key="3"/>